<protein>
    <recommendedName>
        <fullName>Cilia- and flagella-associated protein 184</fullName>
    </recommendedName>
</protein>
<gene>
    <name type="primary">CFAP184</name>
    <name type="synonym">CCDC96</name>
    <name type="ORF">QtsA-18831</name>
</gene>
<keyword id="KW-0966">Cell projection</keyword>
<keyword id="KW-0175">Coiled coil</keyword>
<keyword id="KW-0963">Cytoplasm</keyword>
<keyword id="KW-0206">Cytoskeleton</keyword>
<keyword id="KW-1185">Reference proteome</keyword>
<proteinExistence type="evidence at transcript level"/>
<organism>
    <name type="scientific">Macaca fascicularis</name>
    <name type="common">Crab-eating macaque</name>
    <name type="synonym">Cynomolgus monkey</name>
    <dbReference type="NCBI Taxonomy" id="9541"/>
    <lineage>
        <taxon>Eukaryota</taxon>
        <taxon>Metazoa</taxon>
        <taxon>Chordata</taxon>
        <taxon>Craniata</taxon>
        <taxon>Vertebrata</taxon>
        <taxon>Euteleostomi</taxon>
        <taxon>Mammalia</taxon>
        <taxon>Eutheria</taxon>
        <taxon>Euarchontoglires</taxon>
        <taxon>Primates</taxon>
        <taxon>Haplorrhini</taxon>
        <taxon>Catarrhini</taxon>
        <taxon>Cercopithecidae</taxon>
        <taxon>Cercopithecinae</taxon>
        <taxon>Macaca</taxon>
    </lineage>
</organism>
<name>CF184_MACFA</name>
<sequence length="560" mass="63140">MEGGSEHTKDPGGEGGDGESLAARPSKIKASSGPPTPPEPGELESEPEEEEEEEEEEEEEASQGGTAADEQAKVPKELTAAEAAGEEGPGEPGRPAKPQPEPEEPAEAGAEEPVQPKSGAGPEELDAEARAEELEQAAEGKEVRSQASLPLTRIGEEEAAAAPEAETERVEGEEEDEEETRRDGAESEGRAGEGRPAKSQEEGKPLGGRDEFEDLEWSEEVQKLQEQQLRSDLLDQYRSLLMERNRSQRYNLYLQHKIFEALRKKKGLEAAEVPDRGAQAEAPEKEQAYLRHLGMLEDLKKQQADDLQWYHQELGQLKQQCQEKLSRVEKEWRRFQALKKQVVMQAMGSCRMRGGRQAALREVEQILALEDKKEKEMSAVRLENVQLKQSLVHFETRMRTQEDLTQGLLLIDFEQLKIENQTFNEKIEERNEELLKLRNKVTNSVQVITHMKEKLHFMDTENACKKKQLAEIEAQVAQGRDILTKTKQAREGLRTDNIRLNQKCGLLGNDSLLRDLEEKVDKTQLLHQRLESLKRHHAGLTLSCRGVRQKIREAKAFLPS</sequence>
<comment type="function">
    <text evidence="1">In complex with CFAP263, acts as a regulator of ciliary beating that connects radial spoke 3 (RS3) to the inner dynein arm (IDA) and the nexin-dynein regulatory complex (N-DRC). The complex is positioned parallel to N-DRC and forms a connection between the arch at the base of RS3, the IDA tail and N-DRC.</text>
</comment>
<comment type="subunit">
    <text evidence="1">Forms a complex with CFAP263; the interaction is required for functional activity in cilia.</text>
</comment>
<comment type="subcellular location">
    <subcellularLocation>
        <location evidence="1">Cell projection</location>
        <location evidence="1">Cilium</location>
    </subcellularLocation>
    <subcellularLocation>
        <location evidence="2">Cytoplasm</location>
        <location evidence="2">Cytoskeleton</location>
        <location evidence="2">Microtubule organizing center</location>
        <location evidence="2">Centrosome</location>
    </subcellularLocation>
    <text evidence="1">Localizes at cilium but not at the ciliary tips.</text>
</comment>
<comment type="similarity">
    <text evidence="5">Belongs to the CFAP184 family.</text>
</comment>
<feature type="chain" id="PRO_0000234097" description="Cilia- and flagella-associated protein 184">
    <location>
        <begin position="1"/>
        <end position="560"/>
    </location>
</feature>
<feature type="region of interest" description="Disordered" evidence="4">
    <location>
        <begin position="1"/>
        <end position="209"/>
    </location>
</feature>
<feature type="coiled-coil region" evidence="3">
    <location>
        <begin position="357"/>
        <end position="481"/>
    </location>
</feature>
<feature type="coiled-coil region" evidence="3">
    <location>
        <begin position="510"/>
        <end position="536"/>
    </location>
</feature>
<feature type="compositionally biased region" description="Basic and acidic residues" evidence="4">
    <location>
        <begin position="1"/>
        <end position="12"/>
    </location>
</feature>
<feature type="compositionally biased region" description="Acidic residues" evidence="4">
    <location>
        <begin position="41"/>
        <end position="61"/>
    </location>
</feature>
<feature type="compositionally biased region" description="Acidic residues" evidence="4">
    <location>
        <begin position="101"/>
        <end position="110"/>
    </location>
</feature>
<feature type="compositionally biased region" description="Basic and acidic residues" evidence="4">
    <location>
        <begin position="127"/>
        <end position="144"/>
    </location>
</feature>
<feature type="compositionally biased region" description="Basic and acidic residues" evidence="4">
    <location>
        <begin position="179"/>
        <end position="209"/>
    </location>
</feature>
<dbReference type="EMBL" id="AB071115">
    <property type="protein sequence ID" value="BAB64509.1"/>
    <property type="molecule type" value="mRNA"/>
</dbReference>
<dbReference type="RefSeq" id="NP_001306310.1">
    <property type="nucleotide sequence ID" value="NM_001319381.1"/>
</dbReference>
<dbReference type="SMR" id="Q95LS7"/>
<dbReference type="eggNOG" id="ENOG502QS75">
    <property type="taxonomic scope" value="Eukaryota"/>
</dbReference>
<dbReference type="Proteomes" id="UP000233100">
    <property type="component" value="Unplaced"/>
</dbReference>
<dbReference type="GO" id="GO:0005930">
    <property type="term" value="C:axoneme"/>
    <property type="evidence" value="ECO:0007669"/>
    <property type="project" value="TreeGrafter"/>
</dbReference>
<dbReference type="GO" id="GO:0005813">
    <property type="term" value="C:centrosome"/>
    <property type="evidence" value="ECO:0007669"/>
    <property type="project" value="UniProtKB-SubCell"/>
</dbReference>
<dbReference type="GO" id="GO:0036064">
    <property type="term" value="C:ciliary basal body"/>
    <property type="evidence" value="ECO:0007669"/>
    <property type="project" value="TreeGrafter"/>
</dbReference>
<dbReference type="GO" id="GO:0060271">
    <property type="term" value="P:cilium assembly"/>
    <property type="evidence" value="ECO:0007669"/>
    <property type="project" value="TreeGrafter"/>
</dbReference>
<dbReference type="InterPro" id="IPR051885">
    <property type="entry name" value="CC_domain-Cilium_Assoc"/>
</dbReference>
<dbReference type="InterPro" id="IPR025254">
    <property type="entry name" value="CCDC113/CCDC96_CC"/>
</dbReference>
<dbReference type="PANTHER" id="PTHR15654">
    <property type="entry name" value="COILED-COIL DOMAIN-CONTAINING PROTEIN 113-RELATED"/>
    <property type="match status" value="1"/>
</dbReference>
<dbReference type="PANTHER" id="PTHR15654:SF1">
    <property type="entry name" value="COILED-COIL DOMAIN-CONTAINING PROTEIN 96"/>
    <property type="match status" value="1"/>
</dbReference>
<dbReference type="Pfam" id="PF13870">
    <property type="entry name" value="CCDC113_CCDC96_CC"/>
    <property type="match status" value="1"/>
</dbReference>
<reference key="1">
    <citation type="journal article" date="2002" name="BMC Genomics">
        <title>Cynomolgus monkey testicular cDNAs for discovery of novel human genes in the human genome sequence.</title>
        <authorList>
            <person name="Osada N."/>
            <person name="Hida M."/>
            <person name="Kusuda J."/>
            <person name="Tanuma R."/>
            <person name="Hirata M."/>
            <person name="Suto Y."/>
            <person name="Hirai M."/>
            <person name="Terao K."/>
            <person name="Sugano S."/>
            <person name="Hashimoto K."/>
        </authorList>
    </citation>
    <scope>NUCLEOTIDE SEQUENCE [LARGE SCALE MRNA]</scope>
    <source>
        <tissue>Testis</tissue>
    </source>
</reference>
<accession>Q95LS7</accession>
<evidence type="ECO:0000250" key="1">
    <source>
        <dbReference type="UniProtKB" id="I7M6D6"/>
    </source>
</evidence>
<evidence type="ECO:0000250" key="2">
    <source>
        <dbReference type="UniProtKB" id="Q2M329"/>
    </source>
</evidence>
<evidence type="ECO:0000255" key="3"/>
<evidence type="ECO:0000256" key="4">
    <source>
        <dbReference type="SAM" id="MobiDB-lite"/>
    </source>
</evidence>
<evidence type="ECO:0000305" key="5"/>